<evidence type="ECO:0000255" key="1">
    <source>
        <dbReference type="HAMAP-Rule" id="MF_00600"/>
    </source>
</evidence>
<dbReference type="EC" id="5.6.1.7" evidence="1"/>
<dbReference type="EMBL" id="CP000107">
    <property type="protein sequence ID" value="AAZ68681.1"/>
    <property type="molecule type" value="Genomic_DNA"/>
</dbReference>
<dbReference type="RefSeq" id="WP_011304758.1">
    <property type="nucleotide sequence ID" value="NC_007354.1"/>
</dbReference>
<dbReference type="SMR" id="Q3YRH4"/>
<dbReference type="FunCoup" id="Q3YRH4">
    <property type="interactions" value="367"/>
</dbReference>
<dbReference type="STRING" id="269484.Ecaj_0647"/>
<dbReference type="KEGG" id="ecn:Ecaj_0647"/>
<dbReference type="eggNOG" id="COG0459">
    <property type="taxonomic scope" value="Bacteria"/>
</dbReference>
<dbReference type="HOGENOM" id="CLU_016503_3_0_5"/>
<dbReference type="InParanoid" id="Q3YRH4"/>
<dbReference type="Proteomes" id="UP000000435">
    <property type="component" value="Chromosome"/>
</dbReference>
<dbReference type="GO" id="GO:0005737">
    <property type="term" value="C:cytoplasm"/>
    <property type="evidence" value="ECO:0007669"/>
    <property type="project" value="UniProtKB-SubCell"/>
</dbReference>
<dbReference type="GO" id="GO:0005524">
    <property type="term" value="F:ATP binding"/>
    <property type="evidence" value="ECO:0007669"/>
    <property type="project" value="UniProtKB-UniRule"/>
</dbReference>
<dbReference type="GO" id="GO:0140662">
    <property type="term" value="F:ATP-dependent protein folding chaperone"/>
    <property type="evidence" value="ECO:0007669"/>
    <property type="project" value="InterPro"/>
</dbReference>
<dbReference type="GO" id="GO:0016853">
    <property type="term" value="F:isomerase activity"/>
    <property type="evidence" value="ECO:0007669"/>
    <property type="project" value="UniProtKB-KW"/>
</dbReference>
<dbReference type="GO" id="GO:0051082">
    <property type="term" value="F:unfolded protein binding"/>
    <property type="evidence" value="ECO:0007669"/>
    <property type="project" value="UniProtKB-UniRule"/>
</dbReference>
<dbReference type="GO" id="GO:0042026">
    <property type="term" value="P:protein refolding"/>
    <property type="evidence" value="ECO:0007669"/>
    <property type="project" value="UniProtKB-UniRule"/>
</dbReference>
<dbReference type="CDD" id="cd03344">
    <property type="entry name" value="GroEL"/>
    <property type="match status" value="1"/>
</dbReference>
<dbReference type="FunFam" id="3.50.7.10:FF:000001">
    <property type="entry name" value="60 kDa chaperonin"/>
    <property type="match status" value="1"/>
</dbReference>
<dbReference type="Gene3D" id="3.50.7.10">
    <property type="entry name" value="GroEL"/>
    <property type="match status" value="1"/>
</dbReference>
<dbReference type="Gene3D" id="1.10.560.10">
    <property type="entry name" value="GroEL-like equatorial domain"/>
    <property type="match status" value="1"/>
</dbReference>
<dbReference type="Gene3D" id="3.30.260.10">
    <property type="entry name" value="TCP-1-like chaperonin intermediate domain"/>
    <property type="match status" value="1"/>
</dbReference>
<dbReference type="HAMAP" id="MF_00600">
    <property type="entry name" value="CH60"/>
    <property type="match status" value="1"/>
</dbReference>
<dbReference type="InterPro" id="IPR018370">
    <property type="entry name" value="Chaperonin_Cpn60_CS"/>
</dbReference>
<dbReference type="InterPro" id="IPR001844">
    <property type="entry name" value="Cpn60/GroEL"/>
</dbReference>
<dbReference type="InterPro" id="IPR002423">
    <property type="entry name" value="Cpn60/GroEL/TCP-1"/>
</dbReference>
<dbReference type="InterPro" id="IPR027409">
    <property type="entry name" value="GroEL-like_apical_dom_sf"/>
</dbReference>
<dbReference type="InterPro" id="IPR027413">
    <property type="entry name" value="GROEL-like_equatorial_sf"/>
</dbReference>
<dbReference type="InterPro" id="IPR027410">
    <property type="entry name" value="TCP-1-like_intermed_sf"/>
</dbReference>
<dbReference type="NCBIfam" id="TIGR02348">
    <property type="entry name" value="GroEL"/>
    <property type="match status" value="1"/>
</dbReference>
<dbReference type="NCBIfam" id="NF000592">
    <property type="entry name" value="PRK00013.1"/>
    <property type="match status" value="1"/>
</dbReference>
<dbReference type="NCBIfam" id="NF009487">
    <property type="entry name" value="PRK12849.1"/>
    <property type="match status" value="1"/>
</dbReference>
<dbReference type="NCBIfam" id="NF009488">
    <property type="entry name" value="PRK12850.1"/>
    <property type="match status" value="1"/>
</dbReference>
<dbReference type="NCBIfam" id="NF009489">
    <property type="entry name" value="PRK12851.1"/>
    <property type="match status" value="1"/>
</dbReference>
<dbReference type="PANTHER" id="PTHR45633">
    <property type="entry name" value="60 KDA HEAT SHOCK PROTEIN, MITOCHONDRIAL"/>
    <property type="match status" value="1"/>
</dbReference>
<dbReference type="Pfam" id="PF00118">
    <property type="entry name" value="Cpn60_TCP1"/>
    <property type="match status" value="1"/>
</dbReference>
<dbReference type="PRINTS" id="PR00298">
    <property type="entry name" value="CHAPERONIN60"/>
</dbReference>
<dbReference type="SUPFAM" id="SSF52029">
    <property type="entry name" value="GroEL apical domain-like"/>
    <property type="match status" value="1"/>
</dbReference>
<dbReference type="SUPFAM" id="SSF48592">
    <property type="entry name" value="GroEL equatorial domain-like"/>
    <property type="match status" value="1"/>
</dbReference>
<dbReference type="SUPFAM" id="SSF54849">
    <property type="entry name" value="GroEL-intermediate domain like"/>
    <property type="match status" value="1"/>
</dbReference>
<dbReference type="PROSITE" id="PS00296">
    <property type="entry name" value="CHAPERONINS_CPN60"/>
    <property type="match status" value="1"/>
</dbReference>
<accession>Q3YRH4</accession>
<feature type="chain" id="PRO_0000256907" description="Chaperonin GroEL">
    <location>
        <begin position="1"/>
        <end position="552"/>
    </location>
</feature>
<feature type="binding site" evidence="1">
    <location>
        <begin position="29"/>
        <end position="32"/>
    </location>
    <ligand>
        <name>ATP</name>
        <dbReference type="ChEBI" id="CHEBI:30616"/>
    </ligand>
</feature>
<feature type="binding site" evidence="1">
    <location>
        <position position="50"/>
    </location>
    <ligand>
        <name>ATP</name>
        <dbReference type="ChEBI" id="CHEBI:30616"/>
    </ligand>
</feature>
<feature type="binding site" evidence="1">
    <location>
        <begin position="86"/>
        <end position="90"/>
    </location>
    <ligand>
        <name>ATP</name>
        <dbReference type="ChEBI" id="CHEBI:30616"/>
    </ligand>
</feature>
<feature type="binding site" evidence="1">
    <location>
        <position position="417"/>
    </location>
    <ligand>
        <name>ATP</name>
        <dbReference type="ChEBI" id="CHEBI:30616"/>
    </ligand>
</feature>
<feature type="binding site" evidence="1">
    <location>
        <position position="499"/>
    </location>
    <ligand>
        <name>ATP</name>
        <dbReference type="ChEBI" id="CHEBI:30616"/>
    </ligand>
</feature>
<keyword id="KW-0067">ATP-binding</keyword>
<keyword id="KW-0143">Chaperone</keyword>
<keyword id="KW-0963">Cytoplasm</keyword>
<keyword id="KW-0413">Isomerase</keyword>
<keyword id="KW-0547">Nucleotide-binding</keyword>
<gene>
    <name evidence="1" type="primary">groEL</name>
    <name evidence="1" type="synonym">groL</name>
    <name type="ordered locus">Ecaj_0647</name>
</gene>
<name>CH60_EHRCJ</name>
<proteinExistence type="inferred from homology"/>
<sequence>MANVVVTGEQLDKAIREVVHILEDAVGCTAGPKGLTVAISKPYGAPEITKDGYKVIKSIKPEDPLALAIANIIAQSASQCNDKVGDGTTTCSILTAKVIEEVSKAKAAGADIVCIKDGVLKAKEAVLDALMSMKREVLSEEEIAQVATISANGDKNIGVKIAQCVQEVGKDGVITVEESKGFKELDVEKTDGMQFDRGYLSPYFVTNSEKMLVEFENPYILLTEKKLNIIQPILPILENVARSGRPLLIIAEDVEGEALSTLVLNKLRGGLHVAAVKAPGFGDRRKDMLGDIAILTGAKHVISDDLAIKMEDLTLAELGTAKNIRITKDTTTIIGSVDNSSDNVQSRINQIKVQIESSTSDYDKEKLRERLAKLSGGVAVLKVGGSSEVEVKERKDRVEDALHATRAAVEEGVVPGGGAALLYTLSVLENLKSKNDDEQLGINIIKRALQAPIKRIIRNSGSENAPCVIAHLLKQNDKELIFNVDTMNFANAFTSGVIDPLKVVRIAFDFAVSLAAVFMTLNAIVVDVPSKDDAGAAGGAGGMGGMGGMGGF</sequence>
<comment type="function">
    <text evidence="1">Together with its co-chaperonin GroES, plays an essential role in assisting protein folding. The GroEL-GroES system forms a nano-cage that allows encapsulation of the non-native substrate proteins and provides a physical environment optimized to promote and accelerate protein folding.</text>
</comment>
<comment type="catalytic activity">
    <reaction evidence="1">
        <text>ATP + H2O + a folded polypeptide = ADP + phosphate + an unfolded polypeptide.</text>
        <dbReference type="EC" id="5.6.1.7"/>
    </reaction>
</comment>
<comment type="subunit">
    <text evidence="1">Forms a cylinder of 14 subunits composed of two heptameric rings stacked back-to-back. Interacts with the co-chaperonin GroES.</text>
</comment>
<comment type="subcellular location">
    <subcellularLocation>
        <location evidence="1">Cytoplasm</location>
    </subcellularLocation>
</comment>
<comment type="similarity">
    <text evidence="1">Belongs to the chaperonin (HSP60) family.</text>
</comment>
<organism>
    <name type="scientific">Ehrlichia canis (strain Jake)</name>
    <dbReference type="NCBI Taxonomy" id="269484"/>
    <lineage>
        <taxon>Bacteria</taxon>
        <taxon>Pseudomonadati</taxon>
        <taxon>Pseudomonadota</taxon>
        <taxon>Alphaproteobacteria</taxon>
        <taxon>Rickettsiales</taxon>
        <taxon>Anaplasmataceae</taxon>
        <taxon>Ehrlichia</taxon>
    </lineage>
</organism>
<protein>
    <recommendedName>
        <fullName evidence="1">Chaperonin GroEL</fullName>
        <ecNumber evidence="1">5.6.1.7</ecNumber>
    </recommendedName>
    <alternativeName>
        <fullName evidence="1">60 kDa chaperonin</fullName>
    </alternativeName>
    <alternativeName>
        <fullName evidence="1">Chaperonin-60</fullName>
        <shortName evidence="1">Cpn60</shortName>
    </alternativeName>
</protein>
<reference key="1">
    <citation type="journal article" date="2006" name="J. Bacteriol.">
        <title>The genome of the obligately intracellular bacterium Ehrlichia canis reveals themes of complex membrane structure and immune evasion strategies.</title>
        <authorList>
            <person name="Mavromatis K."/>
            <person name="Doyle C.K."/>
            <person name="Lykidis A."/>
            <person name="Ivanova N."/>
            <person name="Francino M.P."/>
            <person name="Chain P."/>
            <person name="Shin M."/>
            <person name="Malfatti S."/>
            <person name="Larimer F."/>
            <person name="Copeland A."/>
            <person name="Detter J.C."/>
            <person name="Land M."/>
            <person name="Richardson P.M."/>
            <person name="Yu X.J."/>
            <person name="Walker D.H."/>
            <person name="McBride J.W."/>
            <person name="Kyrpides N.C."/>
        </authorList>
    </citation>
    <scope>NUCLEOTIDE SEQUENCE [LARGE SCALE GENOMIC DNA]</scope>
    <source>
        <strain>Jake</strain>
    </source>
</reference>